<proteinExistence type="inferred from homology"/>
<reference key="1">
    <citation type="journal article" date="2005" name="Nucleic Acids Res.">
        <title>Genomic blueprint of Hahella chejuensis, a marine microbe producing an algicidal agent.</title>
        <authorList>
            <person name="Jeong H."/>
            <person name="Yim J.H."/>
            <person name="Lee C."/>
            <person name="Choi S.-H."/>
            <person name="Park Y.K."/>
            <person name="Yoon S.H."/>
            <person name="Hur C.-G."/>
            <person name="Kang H.-Y."/>
            <person name="Kim D."/>
            <person name="Lee H.H."/>
            <person name="Park K.H."/>
            <person name="Park S.-H."/>
            <person name="Park H.-S."/>
            <person name="Lee H.K."/>
            <person name="Oh T.K."/>
            <person name="Kim J.F."/>
        </authorList>
    </citation>
    <scope>NUCLEOTIDE SEQUENCE [LARGE SCALE GENOMIC DNA]</scope>
    <source>
        <strain>KCTC 2396</strain>
    </source>
</reference>
<comment type="function">
    <text evidence="1">Catalyzes the phosphorylation of the 3'-hydroxyl group of dephosphocoenzyme A to form coenzyme A.</text>
</comment>
<comment type="catalytic activity">
    <reaction evidence="1">
        <text>3'-dephospho-CoA + ATP = ADP + CoA + H(+)</text>
        <dbReference type="Rhea" id="RHEA:18245"/>
        <dbReference type="ChEBI" id="CHEBI:15378"/>
        <dbReference type="ChEBI" id="CHEBI:30616"/>
        <dbReference type="ChEBI" id="CHEBI:57287"/>
        <dbReference type="ChEBI" id="CHEBI:57328"/>
        <dbReference type="ChEBI" id="CHEBI:456216"/>
        <dbReference type="EC" id="2.7.1.24"/>
    </reaction>
</comment>
<comment type="pathway">
    <text evidence="1">Cofactor biosynthesis; coenzyme A biosynthesis; CoA from (R)-pantothenate: step 5/5.</text>
</comment>
<comment type="subcellular location">
    <subcellularLocation>
        <location evidence="1">Cytoplasm</location>
    </subcellularLocation>
</comment>
<comment type="similarity">
    <text evidence="1">Belongs to the CoaE family.</text>
</comment>
<feature type="chain" id="PRO_0000243295" description="Dephospho-CoA kinase">
    <location>
        <begin position="1"/>
        <end position="208"/>
    </location>
</feature>
<feature type="domain" description="DPCK" evidence="1">
    <location>
        <begin position="11"/>
        <end position="207"/>
    </location>
</feature>
<feature type="binding site" evidence="1">
    <location>
        <begin position="19"/>
        <end position="24"/>
    </location>
    <ligand>
        <name>ATP</name>
        <dbReference type="ChEBI" id="CHEBI:30616"/>
    </ligand>
</feature>
<dbReference type="EC" id="2.7.1.24" evidence="1"/>
<dbReference type="EMBL" id="CP000155">
    <property type="protein sequence ID" value="ABC31955.1"/>
    <property type="molecule type" value="Genomic_DNA"/>
</dbReference>
<dbReference type="RefSeq" id="WP_011399019.1">
    <property type="nucleotide sequence ID" value="NC_007645.1"/>
</dbReference>
<dbReference type="SMR" id="Q2SBL9"/>
<dbReference type="STRING" id="349521.HCH_05281"/>
<dbReference type="KEGG" id="hch:HCH_05281"/>
<dbReference type="eggNOG" id="COG0237">
    <property type="taxonomic scope" value="Bacteria"/>
</dbReference>
<dbReference type="HOGENOM" id="CLU_057180_1_2_6"/>
<dbReference type="OrthoDB" id="9812943at2"/>
<dbReference type="UniPathway" id="UPA00241">
    <property type="reaction ID" value="UER00356"/>
</dbReference>
<dbReference type="Proteomes" id="UP000000238">
    <property type="component" value="Chromosome"/>
</dbReference>
<dbReference type="GO" id="GO:0005737">
    <property type="term" value="C:cytoplasm"/>
    <property type="evidence" value="ECO:0007669"/>
    <property type="project" value="UniProtKB-SubCell"/>
</dbReference>
<dbReference type="GO" id="GO:0005524">
    <property type="term" value="F:ATP binding"/>
    <property type="evidence" value="ECO:0007669"/>
    <property type="project" value="UniProtKB-UniRule"/>
</dbReference>
<dbReference type="GO" id="GO:0004140">
    <property type="term" value="F:dephospho-CoA kinase activity"/>
    <property type="evidence" value="ECO:0007669"/>
    <property type="project" value="UniProtKB-UniRule"/>
</dbReference>
<dbReference type="GO" id="GO:0015937">
    <property type="term" value="P:coenzyme A biosynthetic process"/>
    <property type="evidence" value="ECO:0007669"/>
    <property type="project" value="UniProtKB-UniRule"/>
</dbReference>
<dbReference type="CDD" id="cd02022">
    <property type="entry name" value="DPCK"/>
    <property type="match status" value="1"/>
</dbReference>
<dbReference type="Gene3D" id="3.40.50.300">
    <property type="entry name" value="P-loop containing nucleotide triphosphate hydrolases"/>
    <property type="match status" value="1"/>
</dbReference>
<dbReference type="HAMAP" id="MF_00376">
    <property type="entry name" value="Dephospho_CoA_kinase"/>
    <property type="match status" value="1"/>
</dbReference>
<dbReference type="InterPro" id="IPR001977">
    <property type="entry name" value="Depp_CoAkinase"/>
</dbReference>
<dbReference type="InterPro" id="IPR027417">
    <property type="entry name" value="P-loop_NTPase"/>
</dbReference>
<dbReference type="NCBIfam" id="TIGR00152">
    <property type="entry name" value="dephospho-CoA kinase"/>
    <property type="match status" value="1"/>
</dbReference>
<dbReference type="PANTHER" id="PTHR10695:SF46">
    <property type="entry name" value="BIFUNCTIONAL COENZYME A SYNTHASE-RELATED"/>
    <property type="match status" value="1"/>
</dbReference>
<dbReference type="PANTHER" id="PTHR10695">
    <property type="entry name" value="DEPHOSPHO-COA KINASE-RELATED"/>
    <property type="match status" value="1"/>
</dbReference>
<dbReference type="Pfam" id="PF01121">
    <property type="entry name" value="CoaE"/>
    <property type="match status" value="1"/>
</dbReference>
<dbReference type="SUPFAM" id="SSF52540">
    <property type="entry name" value="P-loop containing nucleoside triphosphate hydrolases"/>
    <property type="match status" value="1"/>
</dbReference>
<dbReference type="PROSITE" id="PS51219">
    <property type="entry name" value="DPCK"/>
    <property type="match status" value="1"/>
</dbReference>
<protein>
    <recommendedName>
        <fullName evidence="1">Dephospho-CoA kinase</fullName>
        <ecNumber evidence="1">2.7.1.24</ecNumber>
    </recommendedName>
    <alternativeName>
        <fullName evidence="1">Dephosphocoenzyme A kinase</fullName>
    </alternativeName>
</protein>
<evidence type="ECO:0000255" key="1">
    <source>
        <dbReference type="HAMAP-Rule" id="MF_00376"/>
    </source>
</evidence>
<sequence length="208" mass="23442">MNQIPQHKSLVIGLTGGIASGKSAAAAKFVELDIPCIDADQVARDVVEPGEPALQHIAEHFGSALITPNGVLDRAALRKLVFNDPEQKKWLESLLHPLINQRIRDWLGACKTPYCILASPLLLETRQRELVDRILVIDVPESVQIARAMARDQNSEDLVRRIIATQSGREYKRQHADDIILNDKDLAHLYHEVAKLHEYYLELAQHDR</sequence>
<name>COAE_HAHCH</name>
<organism>
    <name type="scientific">Hahella chejuensis (strain KCTC 2396)</name>
    <dbReference type="NCBI Taxonomy" id="349521"/>
    <lineage>
        <taxon>Bacteria</taxon>
        <taxon>Pseudomonadati</taxon>
        <taxon>Pseudomonadota</taxon>
        <taxon>Gammaproteobacteria</taxon>
        <taxon>Oceanospirillales</taxon>
        <taxon>Hahellaceae</taxon>
        <taxon>Hahella</taxon>
    </lineage>
</organism>
<gene>
    <name evidence="1" type="primary">coaE</name>
    <name type="ordered locus">HCH_05281</name>
</gene>
<accession>Q2SBL9</accession>
<keyword id="KW-0067">ATP-binding</keyword>
<keyword id="KW-0173">Coenzyme A biosynthesis</keyword>
<keyword id="KW-0963">Cytoplasm</keyword>
<keyword id="KW-0418">Kinase</keyword>
<keyword id="KW-0547">Nucleotide-binding</keyword>
<keyword id="KW-1185">Reference proteome</keyword>
<keyword id="KW-0808">Transferase</keyword>